<sequence length="205" mass="22202">MSVGILGTKVGMTQFFDETGLSIPVTVIQVGPCVITQIKSMSTDGYNAIQVGYKQVVEQKLSKPLLGHLKKSQSPPLKYLREYLVESIEDFEVSQVFSTNIFEVGQKVNVSSKSIGKGFSGYQKRHHFSRGPMSHGSKNHRQPGSIGAGTTPGRVYPGKNMAGQMGNKKVTIKNLQIVSINIENDLLLLKGAVPGKQGALVKVSK</sequence>
<organism>
    <name type="scientific">Porphyra purpurea</name>
    <name type="common">Red seaweed</name>
    <name type="synonym">Ulva purpurea</name>
    <dbReference type="NCBI Taxonomy" id="2787"/>
    <lineage>
        <taxon>Eukaryota</taxon>
        <taxon>Rhodophyta</taxon>
        <taxon>Bangiophyceae</taxon>
        <taxon>Bangiales</taxon>
        <taxon>Bangiaceae</taxon>
        <taxon>Porphyra</taxon>
    </lineage>
</organism>
<protein>
    <recommendedName>
        <fullName evidence="3">Large ribosomal subunit protein uL3c</fullName>
    </recommendedName>
    <alternativeName>
        <fullName>50S ribosomal protein L3, chloroplastic</fullName>
    </alternativeName>
</protein>
<proteinExistence type="inferred from homology"/>
<comment type="function">
    <text evidence="1">One of the primary rRNA binding proteins, it binds directly near the 3'-end of the 23S rRNA, where it nucleates assembly of the 50S subunit.</text>
</comment>
<comment type="subunit">
    <text>Part of the 50S ribosomal subunit.</text>
</comment>
<comment type="subcellular location">
    <subcellularLocation>
        <location>Plastid</location>
        <location>Chloroplast</location>
    </subcellularLocation>
</comment>
<comment type="similarity">
    <text evidence="3">Belongs to the universal ribosomal protein uL3 family.</text>
</comment>
<gene>
    <name type="primary">rpl3</name>
</gene>
<feature type="chain" id="PRO_0000077204" description="Large ribosomal subunit protein uL3c">
    <location>
        <begin position="1"/>
        <end position="205"/>
    </location>
</feature>
<feature type="region of interest" description="Disordered" evidence="2">
    <location>
        <begin position="127"/>
        <end position="153"/>
    </location>
</feature>
<keyword id="KW-0150">Chloroplast</keyword>
<keyword id="KW-0934">Plastid</keyword>
<keyword id="KW-0687">Ribonucleoprotein</keyword>
<keyword id="KW-0689">Ribosomal protein</keyword>
<keyword id="KW-0694">RNA-binding</keyword>
<keyword id="KW-0699">rRNA-binding</keyword>
<name>RK3_PORPU</name>
<evidence type="ECO:0000250" key="1"/>
<evidence type="ECO:0000256" key="2">
    <source>
        <dbReference type="SAM" id="MobiDB-lite"/>
    </source>
</evidence>
<evidence type="ECO:0000305" key="3"/>
<accession>P51314</accession>
<geneLocation type="chloroplast"/>
<reference key="1">
    <citation type="journal article" date="1995" name="Plant Mol. Biol. Rep.">
        <title>Complete nucleotide sequence of the Porphyra purpurea chloroplast genome.</title>
        <authorList>
            <person name="Reith M.E."/>
            <person name="Munholland J."/>
        </authorList>
    </citation>
    <scope>NUCLEOTIDE SEQUENCE [LARGE SCALE GENOMIC DNA]</scope>
    <source>
        <strain>Avonport</strain>
    </source>
</reference>
<dbReference type="EMBL" id="U38804">
    <property type="protein sequence ID" value="AAC08200.1"/>
    <property type="molecule type" value="Genomic_DNA"/>
</dbReference>
<dbReference type="PIR" id="S73235">
    <property type="entry name" value="S73235"/>
</dbReference>
<dbReference type="RefSeq" id="NP_053924.1">
    <property type="nucleotide sequence ID" value="NC_000925.1"/>
</dbReference>
<dbReference type="SMR" id="P51314"/>
<dbReference type="GeneID" id="809943"/>
<dbReference type="GO" id="GO:0009507">
    <property type="term" value="C:chloroplast"/>
    <property type="evidence" value="ECO:0007669"/>
    <property type="project" value="UniProtKB-SubCell"/>
</dbReference>
<dbReference type="GO" id="GO:0022625">
    <property type="term" value="C:cytosolic large ribosomal subunit"/>
    <property type="evidence" value="ECO:0007669"/>
    <property type="project" value="TreeGrafter"/>
</dbReference>
<dbReference type="GO" id="GO:0019843">
    <property type="term" value="F:rRNA binding"/>
    <property type="evidence" value="ECO:0007669"/>
    <property type="project" value="UniProtKB-UniRule"/>
</dbReference>
<dbReference type="GO" id="GO:0003735">
    <property type="term" value="F:structural constituent of ribosome"/>
    <property type="evidence" value="ECO:0007669"/>
    <property type="project" value="InterPro"/>
</dbReference>
<dbReference type="GO" id="GO:0006412">
    <property type="term" value="P:translation"/>
    <property type="evidence" value="ECO:0007669"/>
    <property type="project" value="UniProtKB-UniRule"/>
</dbReference>
<dbReference type="FunFam" id="3.30.160.810:FF:000001">
    <property type="entry name" value="50S ribosomal protein L3"/>
    <property type="match status" value="1"/>
</dbReference>
<dbReference type="FunFam" id="2.40.30.10:FF:000065">
    <property type="entry name" value="50S ribosomal protein L3, chloroplastic"/>
    <property type="match status" value="1"/>
</dbReference>
<dbReference type="Gene3D" id="3.30.160.810">
    <property type="match status" value="1"/>
</dbReference>
<dbReference type="Gene3D" id="2.40.30.10">
    <property type="entry name" value="Translation factors"/>
    <property type="match status" value="1"/>
</dbReference>
<dbReference type="HAMAP" id="MF_01325_B">
    <property type="entry name" value="Ribosomal_uL3_B"/>
    <property type="match status" value="1"/>
</dbReference>
<dbReference type="InterPro" id="IPR000597">
    <property type="entry name" value="Ribosomal_uL3"/>
</dbReference>
<dbReference type="InterPro" id="IPR019927">
    <property type="entry name" value="Ribosomal_uL3_bac/org-type"/>
</dbReference>
<dbReference type="InterPro" id="IPR019926">
    <property type="entry name" value="Ribosomal_uL3_CS"/>
</dbReference>
<dbReference type="InterPro" id="IPR009000">
    <property type="entry name" value="Transl_B-barrel_sf"/>
</dbReference>
<dbReference type="NCBIfam" id="TIGR03625">
    <property type="entry name" value="L3_bact"/>
    <property type="match status" value="1"/>
</dbReference>
<dbReference type="PANTHER" id="PTHR11229">
    <property type="entry name" value="50S RIBOSOMAL PROTEIN L3"/>
    <property type="match status" value="1"/>
</dbReference>
<dbReference type="PANTHER" id="PTHR11229:SF16">
    <property type="entry name" value="LARGE RIBOSOMAL SUBUNIT PROTEIN UL3C"/>
    <property type="match status" value="1"/>
</dbReference>
<dbReference type="Pfam" id="PF00297">
    <property type="entry name" value="Ribosomal_L3"/>
    <property type="match status" value="1"/>
</dbReference>
<dbReference type="SUPFAM" id="SSF50447">
    <property type="entry name" value="Translation proteins"/>
    <property type="match status" value="1"/>
</dbReference>
<dbReference type="PROSITE" id="PS00474">
    <property type="entry name" value="RIBOSOMAL_L3"/>
    <property type="match status" value="1"/>
</dbReference>